<sequence>MSDCSQNLLYDKFELPESVKMMAVEGSGGSVDKQASFIAEPLERGMGHTLGNALRRALLIGLEAPAIISFSMTGVLHEYMAINGIIEDVTNIILNLKGALLKKYPFQDSENGRCTQLLKSKVSIDASDLAACGGQKAVTLADLLQEGGFESVNPDYVIFTVTQPMQLDITLRVAFGRGYTTSERIVLEDKGVNEIVLDAAFSPVVLVNYFVEDTRVGQDTDFDRLILHVETDGRVSPKEALAFSTQILTKHFSIFEKMDEKKIVFEEAISLEKENKDDILHKLVLGINEIELSVRSTNCLSNANIETIGELVIMPEPRLLQFRNFGKKSLCEIKNKLKEMKLELGMDLSQFGVGLDNVKEKMKWYADKIRSKNGKG</sequence>
<keyword id="KW-0240">DNA-directed RNA polymerase</keyword>
<keyword id="KW-0548">Nucleotidyltransferase</keyword>
<keyword id="KW-0804">Transcription</keyword>
<keyword id="KW-0808">Transferase</keyword>
<protein>
    <recommendedName>
        <fullName evidence="1">DNA-directed RNA polymerase subunit alpha</fullName>
        <shortName evidence="1">RNAP subunit alpha</shortName>
        <ecNumber evidence="1">2.7.7.6</ecNumber>
    </recommendedName>
    <alternativeName>
        <fullName evidence="1">RNA polymerase subunit alpha</fullName>
    </alternativeName>
    <alternativeName>
        <fullName evidence="1">Transcriptase subunit alpha</fullName>
    </alternativeName>
</protein>
<proteinExistence type="inferred from homology"/>
<evidence type="ECO:0000255" key="1">
    <source>
        <dbReference type="HAMAP-Rule" id="MF_00059"/>
    </source>
</evidence>
<organism>
    <name type="scientific">Chlamydia abortus (strain DSM 27085 / S26/3)</name>
    <name type="common">Chlamydophila abortus</name>
    <dbReference type="NCBI Taxonomy" id="218497"/>
    <lineage>
        <taxon>Bacteria</taxon>
        <taxon>Pseudomonadati</taxon>
        <taxon>Chlamydiota</taxon>
        <taxon>Chlamydiia</taxon>
        <taxon>Chlamydiales</taxon>
        <taxon>Chlamydiaceae</taxon>
        <taxon>Chlamydia/Chlamydophila group</taxon>
        <taxon>Chlamydia</taxon>
    </lineage>
</organism>
<reference key="1">
    <citation type="journal article" date="2005" name="Genome Res.">
        <title>The Chlamydophila abortus genome sequence reveals an array of variable proteins that contribute to interspecies variation.</title>
        <authorList>
            <person name="Thomson N.R."/>
            <person name="Yeats C."/>
            <person name="Bell K."/>
            <person name="Holden M.T.G."/>
            <person name="Bentley S.D."/>
            <person name="Livingstone M."/>
            <person name="Cerdeno-Tarraga A.-M."/>
            <person name="Harris B."/>
            <person name="Doggett J."/>
            <person name="Ormond D."/>
            <person name="Mungall K."/>
            <person name="Clarke K."/>
            <person name="Feltwell T."/>
            <person name="Hance Z."/>
            <person name="Sanders M."/>
            <person name="Quail M.A."/>
            <person name="Price C."/>
            <person name="Barrell B.G."/>
            <person name="Parkhill J."/>
            <person name="Longbottom D."/>
        </authorList>
    </citation>
    <scope>NUCLEOTIDE SEQUENCE [LARGE SCALE GENOMIC DNA]</scope>
    <source>
        <strain>DSM 27085 / S26/3</strain>
    </source>
</reference>
<gene>
    <name evidence="1" type="primary">rpoA</name>
    <name type="ordered locus">CAB113</name>
</gene>
<dbReference type="EC" id="2.7.7.6" evidence="1"/>
<dbReference type="EMBL" id="CR848038">
    <property type="protein sequence ID" value="CAH63571.1"/>
    <property type="molecule type" value="Genomic_DNA"/>
</dbReference>
<dbReference type="RefSeq" id="WP_006343782.1">
    <property type="nucleotide sequence ID" value="NC_004552.2"/>
</dbReference>
<dbReference type="SMR" id="Q5L6Z9"/>
<dbReference type="KEGG" id="cab:CAB113"/>
<dbReference type="eggNOG" id="COG0202">
    <property type="taxonomic scope" value="Bacteria"/>
</dbReference>
<dbReference type="HOGENOM" id="CLU_053084_0_1_0"/>
<dbReference type="OrthoDB" id="9805706at2"/>
<dbReference type="Proteomes" id="UP000001012">
    <property type="component" value="Chromosome"/>
</dbReference>
<dbReference type="GO" id="GO:0005737">
    <property type="term" value="C:cytoplasm"/>
    <property type="evidence" value="ECO:0007669"/>
    <property type="project" value="UniProtKB-ARBA"/>
</dbReference>
<dbReference type="GO" id="GO:0000428">
    <property type="term" value="C:DNA-directed RNA polymerase complex"/>
    <property type="evidence" value="ECO:0007669"/>
    <property type="project" value="UniProtKB-KW"/>
</dbReference>
<dbReference type="GO" id="GO:0003677">
    <property type="term" value="F:DNA binding"/>
    <property type="evidence" value="ECO:0007669"/>
    <property type="project" value="UniProtKB-UniRule"/>
</dbReference>
<dbReference type="GO" id="GO:0003899">
    <property type="term" value="F:DNA-directed RNA polymerase activity"/>
    <property type="evidence" value="ECO:0007669"/>
    <property type="project" value="UniProtKB-UniRule"/>
</dbReference>
<dbReference type="GO" id="GO:0046983">
    <property type="term" value="F:protein dimerization activity"/>
    <property type="evidence" value="ECO:0007669"/>
    <property type="project" value="InterPro"/>
</dbReference>
<dbReference type="GO" id="GO:0006351">
    <property type="term" value="P:DNA-templated transcription"/>
    <property type="evidence" value="ECO:0007669"/>
    <property type="project" value="UniProtKB-UniRule"/>
</dbReference>
<dbReference type="CDD" id="cd06928">
    <property type="entry name" value="RNAP_alpha_NTD"/>
    <property type="match status" value="1"/>
</dbReference>
<dbReference type="FunFam" id="1.10.150.20:FF:000078">
    <property type="entry name" value="DNA-directed RNA polymerase subunit alpha"/>
    <property type="match status" value="1"/>
</dbReference>
<dbReference type="Gene3D" id="1.10.150.20">
    <property type="entry name" value="5' to 3' exonuclease, C-terminal subdomain"/>
    <property type="match status" value="1"/>
</dbReference>
<dbReference type="Gene3D" id="2.170.120.12">
    <property type="entry name" value="DNA-directed RNA polymerase, insert domain"/>
    <property type="match status" value="1"/>
</dbReference>
<dbReference type="Gene3D" id="3.30.1360.10">
    <property type="entry name" value="RNA polymerase, RBP11-like subunit"/>
    <property type="match status" value="1"/>
</dbReference>
<dbReference type="HAMAP" id="MF_00059">
    <property type="entry name" value="RNApol_bact_RpoA"/>
    <property type="match status" value="1"/>
</dbReference>
<dbReference type="InterPro" id="IPR011262">
    <property type="entry name" value="DNA-dir_RNA_pol_insert"/>
</dbReference>
<dbReference type="InterPro" id="IPR011263">
    <property type="entry name" value="DNA-dir_RNA_pol_RpoA/D/Rpb3"/>
</dbReference>
<dbReference type="InterPro" id="IPR011773">
    <property type="entry name" value="DNA-dir_RpoA"/>
</dbReference>
<dbReference type="InterPro" id="IPR036603">
    <property type="entry name" value="RBP11-like"/>
</dbReference>
<dbReference type="InterPro" id="IPR011260">
    <property type="entry name" value="RNAP_asu_C"/>
</dbReference>
<dbReference type="InterPro" id="IPR036643">
    <property type="entry name" value="RNApol_insert_sf"/>
</dbReference>
<dbReference type="NCBIfam" id="NF003513">
    <property type="entry name" value="PRK05182.1-2"/>
    <property type="match status" value="1"/>
</dbReference>
<dbReference type="NCBIfam" id="NF003517">
    <property type="entry name" value="PRK05182.2-3"/>
    <property type="match status" value="1"/>
</dbReference>
<dbReference type="NCBIfam" id="NF003519">
    <property type="entry name" value="PRK05182.2-5"/>
    <property type="match status" value="1"/>
</dbReference>
<dbReference type="NCBIfam" id="TIGR02027">
    <property type="entry name" value="rpoA"/>
    <property type="match status" value="1"/>
</dbReference>
<dbReference type="Pfam" id="PF01000">
    <property type="entry name" value="RNA_pol_A_bac"/>
    <property type="match status" value="1"/>
</dbReference>
<dbReference type="Pfam" id="PF03118">
    <property type="entry name" value="RNA_pol_A_CTD"/>
    <property type="match status" value="1"/>
</dbReference>
<dbReference type="Pfam" id="PF01193">
    <property type="entry name" value="RNA_pol_L"/>
    <property type="match status" value="1"/>
</dbReference>
<dbReference type="SMART" id="SM00662">
    <property type="entry name" value="RPOLD"/>
    <property type="match status" value="1"/>
</dbReference>
<dbReference type="SUPFAM" id="SSF47789">
    <property type="entry name" value="C-terminal domain of RNA polymerase alpha subunit"/>
    <property type="match status" value="1"/>
</dbReference>
<dbReference type="SUPFAM" id="SSF56553">
    <property type="entry name" value="Insert subdomain of RNA polymerase alpha subunit"/>
    <property type="match status" value="1"/>
</dbReference>
<dbReference type="SUPFAM" id="SSF55257">
    <property type="entry name" value="RBP11-like subunits of RNA polymerase"/>
    <property type="match status" value="1"/>
</dbReference>
<accession>Q5L6Z9</accession>
<feature type="chain" id="PRO_0000225265" description="DNA-directed RNA polymerase subunit alpha">
    <location>
        <begin position="1"/>
        <end position="376"/>
    </location>
</feature>
<feature type="region of interest" description="Alpha N-terminal domain (alpha-NTD)" evidence="1">
    <location>
        <begin position="1"/>
        <end position="259"/>
    </location>
</feature>
<feature type="region of interest" description="Alpha C-terminal domain (alpha-CTD)" evidence="1">
    <location>
        <begin position="276"/>
        <end position="376"/>
    </location>
</feature>
<comment type="function">
    <text evidence="1">DNA-dependent RNA polymerase catalyzes the transcription of DNA into RNA using the four ribonucleoside triphosphates as substrates.</text>
</comment>
<comment type="catalytic activity">
    <reaction evidence="1">
        <text>RNA(n) + a ribonucleoside 5'-triphosphate = RNA(n+1) + diphosphate</text>
        <dbReference type="Rhea" id="RHEA:21248"/>
        <dbReference type="Rhea" id="RHEA-COMP:14527"/>
        <dbReference type="Rhea" id="RHEA-COMP:17342"/>
        <dbReference type="ChEBI" id="CHEBI:33019"/>
        <dbReference type="ChEBI" id="CHEBI:61557"/>
        <dbReference type="ChEBI" id="CHEBI:140395"/>
        <dbReference type="EC" id="2.7.7.6"/>
    </reaction>
</comment>
<comment type="subunit">
    <text evidence="1">Homodimer. The RNAP catalytic core consists of 2 alpha, 1 beta, 1 beta' and 1 omega subunit. When a sigma factor is associated with the core the holoenzyme is formed, which can initiate transcription.</text>
</comment>
<comment type="domain">
    <text evidence="1">The N-terminal domain is essential for RNAP assembly and basal transcription, whereas the C-terminal domain is involved in interaction with transcriptional regulators and with upstream promoter elements.</text>
</comment>
<comment type="similarity">
    <text evidence="1">Belongs to the RNA polymerase alpha chain family.</text>
</comment>
<name>RPOA_CHLAB</name>